<geneLocation type="chloroplast"/>
<dbReference type="EC" id="1.2.4.1"/>
<dbReference type="EMBL" id="U38804">
    <property type="protein sequence ID" value="AAC08153.1"/>
    <property type="molecule type" value="Genomic_DNA"/>
</dbReference>
<dbReference type="PIR" id="S73188">
    <property type="entry name" value="S73188"/>
</dbReference>
<dbReference type="RefSeq" id="NP_053877.1">
    <property type="nucleotide sequence ID" value="NC_000925.1"/>
</dbReference>
<dbReference type="SMR" id="P51267"/>
<dbReference type="GeneID" id="809896"/>
<dbReference type="GO" id="GO:0009507">
    <property type="term" value="C:chloroplast"/>
    <property type="evidence" value="ECO:0007669"/>
    <property type="project" value="UniProtKB-SubCell"/>
</dbReference>
<dbReference type="GO" id="GO:0046872">
    <property type="term" value="F:metal ion binding"/>
    <property type="evidence" value="ECO:0007669"/>
    <property type="project" value="UniProtKB-KW"/>
</dbReference>
<dbReference type="GO" id="GO:0004739">
    <property type="term" value="F:pyruvate dehydrogenase (acetyl-transferring) activity"/>
    <property type="evidence" value="ECO:0007669"/>
    <property type="project" value="UniProtKB-EC"/>
</dbReference>
<dbReference type="GO" id="GO:0006086">
    <property type="term" value="P:pyruvate decarboxylation to acetyl-CoA"/>
    <property type="evidence" value="ECO:0007669"/>
    <property type="project" value="InterPro"/>
</dbReference>
<dbReference type="CDD" id="cd02000">
    <property type="entry name" value="TPP_E1_PDC_ADC_BCADC"/>
    <property type="match status" value="1"/>
</dbReference>
<dbReference type="FunFam" id="3.40.50.970:FF:000013">
    <property type="entry name" value="Pyruvate dehydrogenase E1 component subunit alpha"/>
    <property type="match status" value="1"/>
</dbReference>
<dbReference type="Gene3D" id="3.40.50.970">
    <property type="match status" value="1"/>
</dbReference>
<dbReference type="InterPro" id="IPR001017">
    <property type="entry name" value="DH_E1"/>
</dbReference>
<dbReference type="InterPro" id="IPR050642">
    <property type="entry name" value="PDH_E1_Alpha_Subunit"/>
</dbReference>
<dbReference type="InterPro" id="IPR017597">
    <property type="entry name" value="Pyrv_DH_E1_asu_subgrp-y"/>
</dbReference>
<dbReference type="InterPro" id="IPR029061">
    <property type="entry name" value="THDP-binding"/>
</dbReference>
<dbReference type="NCBIfam" id="TIGR03182">
    <property type="entry name" value="PDH_E1_alph_y"/>
    <property type="match status" value="1"/>
</dbReference>
<dbReference type="PANTHER" id="PTHR11516:SF60">
    <property type="entry name" value="PYRUVATE DEHYDROGENASE E1 COMPONENT SUBUNIT ALPHA"/>
    <property type="match status" value="1"/>
</dbReference>
<dbReference type="PANTHER" id="PTHR11516">
    <property type="entry name" value="PYRUVATE DEHYDROGENASE E1 COMPONENT, ALPHA SUBUNIT BACTERIAL AND ORGANELLAR"/>
    <property type="match status" value="1"/>
</dbReference>
<dbReference type="Pfam" id="PF00676">
    <property type="entry name" value="E1_dh"/>
    <property type="match status" value="1"/>
</dbReference>
<dbReference type="SUPFAM" id="SSF52518">
    <property type="entry name" value="Thiamin diphosphate-binding fold (THDP-binding)"/>
    <property type="match status" value="1"/>
</dbReference>
<name>ODPA_PORPU</name>
<protein>
    <recommendedName>
        <fullName>Pyruvate dehydrogenase E1 component subunit alpha</fullName>
        <ecNumber>1.2.4.1</ecNumber>
    </recommendedName>
</protein>
<proteinExistence type="inferred from homology"/>
<keyword id="KW-0150">Chloroplast</keyword>
<keyword id="KW-0460">Magnesium</keyword>
<keyword id="KW-0479">Metal-binding</keyword>
<keyword id="KW-0560">Oxidoreductase</keyword>
<keyword id="KW-0934">Plastid</keyword>
<keyword id="KW-0670">Pyruvate</keyword>
<keyword id="KW-0786">Thiamine pyrophosphate</keyword>
<organism>
    <name type="scientific">Porphyra purpurea</name>
    <name type="common">Red seaweed</name>
    <name type="synonym">Ulva purpurea</name>
    <dbReference type="NCBI Taxonomy" id="2787"/>
    <lineage>
        <taxon>Eukaryota</taxon>
        <taxon>Rhodophyta</taxon>
        <taxon>Bangiophyceae</taxon>
        <taxon>Bangiales</taxon>
        <taxon>Bangiaceae</taxon>
        <taxon>Porphyra</taxon>
    </lineage>
</organism>
<feature type="chain" id="PRO_0000162215" description="Pyruvate dehydrogenase E1 component subunit alpha">
    <location>
        <begin position="1"/>
        <end position="344"/>
    </location>
</feature>
<feature type="binding site" evidence="2">
    <location>
        <position position="55"/>
    </location>
    <ligand>
        <name>pyruvate</name>
        <dbReference type="ChEBI" id="CHEBI:15361"/>
    </ligand>
</feature>
<feature type="binding site" evidence="2">
    <location>
        <position position="81"/>
    </location>
    <ligand>
        <name>pyruvate</name>
        <dbReference type="ChEBI" id="CHEBI:15361"/>
    </ligand>
</feature>
<feature type="binding site" evidence="2">
    <location>
        <position position="81"/>
    </location>
    <ligand>
        <name>thiamine diphosphate</name>
        <dbReference type="ChEBI" id="CHEBI:58937"/>
        <note>ligand shared with beta subunit</note>
    </ligand>
</feature>
<feature type="binding site" evidence="2">
    <location>
        <position position="82"/>
    </location>
    <ligand>
        <name>pyruvate</name>
        <dbReference type="ChEBI" id="CHEBI:15361"/>
    </ligand>
</feature>
<feature type="binding site" evidence="2">
    <location>
        <position position="82"/>
    </location>
    <ligand>
        <name>thiamine diphosphate</name>
        <dbReference type="ChEBI" id="CHEBI:58937"/>
        <note>ligand shared with beta subunit</note>
    </ligand>
</feature>
<feature type="binding site" evidence="2">
    <location>
        <position position="130"/>
    </location>
    <ligand>
        <name>pyruvate</name>
        <dbReference type="ChEBI" id="CHEBI:15361"/>
    </ligand>
</feature>
<feature type="binding site" evidence="2">
    <location>
        <position position="130"/>
    </location>
    <ligand>
        <name>thiamine diphosphate</name>
        <dbReference type="ChEBI" id="CHEBI:58937"/>
        <note>ligand shared with beta subunit</note>
    </ligand>
</feature>
<feature type="binding site" evidence="2">
    <location>
        <position position="132"/>
    </location>
    <ligand>
        <name>pyruvate</name>
        <dbReference type="ChEBI" id="CHEBI:15361"/>
    </ligand>
</feature>
<feature type="binding site" evidence="2">
    <location>
        <position position="132"/>
    </location>
    <ligand>
        <name>thiamine diphosphate</name>
        <dbReference type="ChEBI" id="CHEBI:58937"/>
        <note>ligand shared with beta subunit</note>
    </ligand>
</feature>
<feature type="binding site" evidence="2">
    <location>
        <position position="168"/>
    </location>
    <ligand>
        <name>Mg(2+)</name>
        <dbReference type="ChEBI" id="CHEBI:18420"/>
    </ligand>
</feature>
<feature type="binding site" evidence="2">
    <location>
        <position position="168"/>
    </location>
    <ligand>
        <name>pyruvate</name>
        <dbReference type="ChEBI" id="CHEBI:15361"/>
    </ligand>
</feature>
<feature type="binding site" evidence="2">
    <location>
        <position position="168"/>
    </location>
    <ligand>
        <name>thiamine diphosphate</name>
        <dbReference type="ChEBI" id="CHEBI:58937"/>
        <note>ligand shared with beta subunit</note>
    </ligand>
</feature>
<feature type="binding site" evidence="2">
    <location>
        <position position="169"/>
    </location>
    <ligand>
        <name>pyruvate</name>
        <dbReference type="ChEBI" id="CHEBI:15361"/>
    </ligand>
</feature>
<feature type="binding site" evidence="2">
    <location>
        <position position="169"/>
    </location>
    <ligand>
        <name>thiamine diphosphate</name>
        <dbReference type="ChEBI" id="CHEBI:58937"/>
        <note>ligand shared with beta subunit</note>
    </ligand>
</feature>
<feature type="binding site" evidence="2">
    <location>
        <position position="197"/>
    </location>
    <ligand>
        <name>Mg(2+)</name>
        <dbReference type="ChEBI" id="CHEBI:18420"/>
    </ligand>
</feature>
<feature type="binding site" evidence="2">
    <location>
        <position position="197"/>
    </location>
    <ligand>
        <name>pyruvate</name>
        <dbReference type="ChEBI" id="CHEBI:15361"/>
    </ligand>
</feature>
<feature type="binding site" evidence="2">
    <location>
        <position position="197"/>
    </location>
    <ligand>
        <name>thiamine diphosphate</name>
        <dbReference type="ChEBI" id="CHEBI:58937"/>
        <note>ligand shared with beta subunit</note>
    </ligand>
</feature>
<feature type="binding site" evidence="2">
    <location>
        <position position="266"/>
    </location>
    <ligand>
        <name>thiamine diphosphate</name>
        <dbReference type="ChEBI" id="CHEBI:58937"/>
        <note>ligand shared with beta subunit</note>
    </ligand>
</feature>
<evidence type="ECO:0000250" key="1"/>
<evidence type="ECO:0000250" key="2">
    <source>
        <dbReference type="UniProtKB" id="P08559"/>
    </source>
</evidence>
<reference key="1">
    <citation type="journal article" date="1995" name="Plant Mol. Biol. Rep.">
        <title>Complete nucleotide sequence of the Porphyra purpurea chloroplast genome.</title>
        <authorList>
            <person name="Reith M.E."/>
            <person name="Munholland J."/>
        </authorList>
    </citation>
    <scope>NUCLEOTIDE SEQUENCE [LARGE SCALE GENOMIC DNA]</scope>
    <source>
        <strain>Avonport</strain>
    </source>
</reference>
<accession>P51267</accession>
<gene>
    <name type="primary">pdhA</name>
    <name type="synonym">odpA</name>
</gene>
<sequence length="344" mass="38507">MSYPKKVELPLTNCNQINLTKHKLLVLYEDMLLGRNFEDMCAQMYYKGKMFGFVHLYNGQEAVSTGVIKLLDSKDYVCSTYRDHVHALSKGVPSQNVMAELFGKETGCSRGRGGSMHIFSAPHNFLGGFAFIAEGIPVATGAAFQSIYRQQVLKEPGELRVTACFFGDGTTNNGQFFECLNMAVLWKLPIIFVVENNQWAIGMAHHRSSSIPEIHKKAEAFGLPGIEVDGMDVLAVRQVAEKAVERARQGQGPTLIEALTYRFRGHSLADPDELRSRQEKEAWVARDPIKKLKKHILDNQIASSDELNDIQSSVKIDLEQSVEFAMSSPEPNISELKRYLFADN</sequence>
<comment type="function">
    <text evidence="1">The pyruvate dehydrogenase complex catalyzes the overall conversion of pyruvate to acetyl-CoA and CO(2). It contains multiple copies of three enzymatic components: pyruvate dehydrogenase (E1), dihydrolipoamide acetyltransferase (E2) and lipoamide dehydrogenase (E3) (By similarity).</text>
</comment>
<comment type="catalytic activity">
    <reaction>
        <text>N(6)-[(R)-lipoyl]-L-lysyl-[protein] + pyruvate + H(+) = N(6)-[(R)-S(8)-acetyldihydrolipoyl]-L-lysyl-[protein] + CO2</text>
        <dbReference type="Rhea" id="RHEA:19189"/>
        <dbReference type="Rhea" id="RHEA-COMP:10474"/>
        <dbReference type="Rhea" id="RHEA-COMP:10478"/>
        <dbReference type="ChEBI" id="CHEBI:15361"/>
        <dbReference type="ChEBI" id="CHEBI:15378"/>
        <dbReference type="ChEBI" id="CHEBI:16526"/>
        <dbReference type="ChEBI" id="CHEBI:83099"/>
        <dbReference type="ChEBI" id="CHEBI:83111"/>
        <dbReference type="EC" id="1.2.4.1"/>
    </reaction>
</comment>
<comment type="cofactor">
    <cofactor evidence="2">
        <name>thiamine diphosphate</name>
        <dbReference type="ChEBI" id="CHEBI:58937"/>
    </cofactor>
    <cofactor evidence="2">
        <name>Mg(2+)</name>
        <dbReference type="ChEBI" id="CHEBI:18420"/>
    </cofactor>
</comment>
<comment type="subunit">
    <text evidence="1">Heterodimer of an alpha and a beta chain.</text>
</comment>
<comment type="subcellular location">
    <subcellularLocation>
        <location>Plastid</location>
        <location>Chloroplast</location>
    </subcellularLocation>
</comment>